<name>NU2M_CHICK</name>
<comment type="function">
    <text evidence="1">Core subunit of the mitochondrial membrane respiratory chain NADH dehydrogenase (Complex I) which catalyzes electron transfer from NADH through the respiratory chain, using ubiquinone as an electron acceptor. Essential for the catalytic activity and assembly of complex I.</text>
</comment>
<comment type="catalytic activity">
    <reaction evidence="1">
        <text>a ubiquinone + NADH + 5 H(+)(in) = a ubiquinol + NAD(+) + 4 H(+)(out)</text>
        <dbReference type="Rhea" id="RHEA:29091"/>
        <dbReference type="Rhea" id="RHEA-COMP:9565"/>
        <dbReference type="Rhea" id="RHEA-COMP:9566"/>
        <dbReference type="ChEBI" id="CHEBI:15378"/>
        <dbReference type="ChEBI" id="CHEBI:16389"/>
        <dbReference type="ChEBI" id="CHEBI:17976"/>
        <dbReference type="ChEBI" id="CHEBI:57540"/>
        <dbReference type="ChEBI" id="CHEBI:57945"/>
        <dbReference type="EC" id="7.1.1.2"/>
    </reaction>
</comment>
<comment type="subunit">
    <text evidence="2">Core subunit of respiratory chain NADH dehydrogenase (Complex I) which is composed of 45 different subunits.</text>
</comment>
<comment type="subcellular location">
    <subcellularLocation>
        <location evidence="2">Mitochondrion inner membrane</location>
        <topology evidence="3">Multi-pass membrane protein</topology>
    </subcellularLocation>
</comment>
<comment type="similarity">
    <text evidence="4">Belongs to the complex I subunit 2 family.</text>
</comment>
<dbReference type="EC" id="7.1.1.2" evidence="1"/>
<dbReference type="EMBL" id="X52392">
    <property type="protein sequence ID" value="CAA36626.1"/>
    <property type="molecule type" value="Genomic_DNA"/>
</dbReference>
<dbReference type="PIR" id="S10188">
    <property type="entry name" value="S10188"/>
</dbReference>
<dbReference type="RefSeq" id="NP_006916.1">
    <property type="nucleotide sequence ID" value="NC_001323.1"/>
</dbReference>
<dbReference type="SMR" id="P18937"/>
<dbReference type="FunCoup" id="P18937">
    <property type="interactions" value="17"/>
</dbReference>
<dbReference type="STRING" id="9031.ENSGALP00000051543"/>
<dbReference type="PaxDb" id="9031-ENSGALP00000034613"/>
<dbReference type="VEuPathDB" id="HostDB:geneid_63549482"/>
<dbReference type="eggNOG" id="KOG4668">
    <property type="taxonomic scope" value="Eukaryota"/>
</dbReference>
<dbReference type="HOGENOM" id="CLU_007100_1_3_1"/>
<dbReference type="InParanoid" id="P18937"/>
<dbReference type="PhylomeDB" id="P18937"/>
<dbReference type="TreeFam" id="TF343996"/>
<dbReference type="Reactome" id="R-GGA-611105">
    <property type="pathway name" value="Respiratory electron transport"/>
</dbReference>
<dbReference type="Reactome" id="R-GGA-6799198">
    <property type="pathway name" value="Complex I biogenesis"/>
</dbReference>
<dbReference type="PRO" id="PR:P18937"/>
<dbReference type="Proteomes" id="UP000000539">
    <property type="component" value="Mitochondrion MT"/>
</dbReference>
<dbReference type="Bgee" id="ENSGALG00000043768">
    <property type="expression patterns" value="Expressed in cerebellum and 12 other cell types or tissues"/>
</dbReference>
<dbReference type="GO" id="GO:0005743">
    <property type="term" value="C:mitochondrial inner membrane"/>
    <property type="evidence" value="ECO:0000250"/>
    <property type="project" value="UniProtKB"/>
</dbReference>
<dbReference type="GO" id="GO:0045271">
    <property type="term" value="C:respiratory chain complex I"/>
    <property type="evidence" value="ECO:0000318"/>
    <property type="project" value="GO_Central"/>
</dbReference>
<dbReference type="GO" id="GO:0008137">
    <property type="term" value="F:NADH dehydrogenase (ubiquinone) activity"/>
    <property type="evidence" value="ECO:0000250"/>
    <property type="project" value="UniProtKB"/>
</dbReference>
<dbReference type="GO" id="GO:0006120">
    <property type="term" value="P:mitochondrial electron transport, NADH to ubiquinone"/>
    <property type="evidence" value="ECO:0000250"/>
    <property type="project" value="UniProtKB"/>
</dbReference>
<dbReference type="GO" id="GO:0032981">
    <property type="term" value="P:mitochondrial respiratory chain complex I assembly"/>
    <property type="evidence" value="ECO:0000250"/>
    <property type="project" value="UniProtKB"/>
</dbReference>
<dbReference type="InterPro" id="IPR050175">
    <property type="entry name" value="Complex_I_Subunit_2"/>
</dbReference>
<dbReference type="InterPro" id="IPR010933">
    <property type="entry name" value="NADH_DH_su2_C"/>
</dbReference>
<dbReference type="InterPro" id="IPR003917">
    <property type="entry name" value="NADH_UbQ_OxRdtase_chain2"/>
</dbReference>
<dbReference type="InterPro" id="IPR001750">
    <property type="entry name" value="ND/Mrp_TM"/>
</dbReference>
<dbReference type="PANTHER" id="PTHR46552">
    <property type="entry name" value="NADH-UBIQUINONE OXIDOREDUCTASE CHAIN 2"/>
    <property type="match status" value="1"/>
</dbReference>
<dbReference type="PANTHER" id="PTHR46552:SF1">
    <property type="entry name" value="NADH-UBIQUINONE OXIDOREDUCTASE CHAIN 2"/>
    <property type="match status" value="1"/>
</dbReference>
<dbReference type="Pfam" id="PF06444">
    <property type="entry name" value="NADH_dehy_S2_C"/>
    <property type="match status" value="1"/>
</dbReference>
<dbReference type="Pfam" id="PF00361">
    <property type="entry name" value="Proton_antipo_M"/>
    <property type="match status" value="1"/>
</dbReference>
<dbReference type="PRINTS" id="PR01436">
    <property type="entry name" value="NADHDHGNASE2"/>
</dbReference>
<accession>P18937</accession>
<gene>
    <name type="primary">MT-ND2</name>
    <name type="synonym">MTND2</name>
    <name type="synonym">NADH2</name>
    <name type="synonym">ND2</name>
</gene>
<organism>
    <name type="scientific">Gallus gallus</name>
    <name type="common">Chicken</name>
    <dbReference type="NCBI Taxonomy" id="9031"/>
    <lineage>
        <taxon>Eukaryota</taxon>
        <taxon>Metazoa</taxon>
        <taxon>Chordata</taxon>
        <taxon>Craniata</taxon>
        <taxon>Vertebrata</taxon>
        <taxon>Euteleostomi</taxon>
        <taxon>Archelosauria</taxon>
        <taxon>Archosauria</taxon>
        <taxon>Dinosauria</taxon>
        <taxon>Saurischia</taxon>
        <taxon>Theropoda</taxon>
        <taxon>Coelurosauria</taxon>
        <taxon>Aves</taxon>
        <taxon>Neognathae</taxon>
        <taxon>Galloanserae</taxon>
        <taxon>Galliformes</taxon>
        <taxon>Phasianidae</taxon>
        <taxon>Phasianinae</taxon>
        <taxon>Gallus</taxon>
    </lineage>
</organism>
<protein>
    <recommendedName>
        <fullName>NADH-ubiquinone oxidoreductase chain 2</fullName>
        <ecNumber evidence="1">7.1.1.2</ecNumber>
    </recommendedName>
    <alternativeName>
        <fullName>NADH dehydrogenase subunit 2</fullName>
    </alternativeName>
</protein>
<evidence type="ECO:0000250" key="1">
    <source>
        <dbReference type="UniProtKB" id="P03891"/>
    </source>
</evidence>
<evidence type="ECO:0000250" key="2">
    <source>
        <dbReference type="UniProtKB" id="P03892"/>
    </source>
</evidence>
<evidence type="ECO:0000255" key="3"/>
<evidence type="ECO:0000305" key="4"/>
<evidence type="ECO:0000312" key="5">
    <source>
        <dbReference type="Proteomes" id="UP000000539"/>
    </source>
</evidence>
<feature type="chain" id="PRO_0000117569" description="NADH-ubiquinone oxidoreductase chain 2">
    <location>
        <begin position="1"/>
        <end position="346"/>
    </location>
</feature>
<feature type="transmembrane region" description="Helical" evidence="3">
    <location>
        <begin position="25"/>
        <end position="45"/>
    </location>
</feature>
<feature type="transmembrane region" description="Helical" evidence="3">
    <location>
        <begin position="52"/>
        <end position="72"/>
    </location>
</feature>
<feature type="transmembrane region" description="Helical" evidence="3">
    <location>
        <begin position="95"/>
        <end position="115"/>
    </location>
</feature>
<feature type="transmembrane region" description="Helical" evidence="3">
    <location>
        <begin position="124"/>
        <end position="144"/>
    </location>
</feature>
<feature type="transmembrane region" description="Helical" evidence="3">
    <location>
        <begin position="149"/>
        <end position="169"/>
    </location>
</feature>
<feature type="transmembrane region" description="Helical" evidence="3">
    <location>
        <begin position="178"/>
        <end position="198"/>
    </location>
</feature>
<feature type="transmembrane region" description="Helical" evidence="3">
    <location>
        <begin position="200"/>
        <end position="220"/>
    </location>
</feature>
<feature type="transmembrane region" description="Helical" evidence="3">
    <location>
        <begin position="242"/>
        <end position="262"/>
    </location>
</feature>
<feature type="transmembrane region" description="Helical" evidence="3">
    <location>
        <begin position="274"/>
        <end position="294"/>
    </location>
</feature>
<feature type="transmembrane region" description="Helical" evidence="3">
    <location>
        <begin position="326"/>
        <end position="346"/>
    </location>
</feature>
<keyword id="KW-0249">Electron transport</keyword>
<keyword id="KW-0472">Membrane</keyword>
<keyword id="KW-0496">Mitochondrion</keyword>
<keyword id="KW-0999">Mitochondrion inner membrane</keyword>
<keyword id="KW-0520">NAD</keyword>
<keyword id="KW-1185">Reference proteome</keyword>
<keyword id="KW-0679">Respiratory chain</keyword>
<keyword id="KW-1278">Translocase</keyword>
<keyword id="KW-0812">Transmembrane</keyword>
<keyword id="KW-1133">Transmembrane helix</keyword>
<keyword id="KW-0813">Transport</keyword>
<keyword id="KW-0830">Ubiquinone</keyword>
<geneLocation type="mitochondrion"/>
<sequence length="346" mass="38333">MNPHAKLICTVSLIMGTSITISSNHWILAWTGLEINTLAIIPLISKSHHPRAIEATIKYFLTQSTASALILFSSMTNAWSTGQWDITQLNHPTSCLMLTMAIAIKLGLVPFHFWFPEVLQGSSLITALLLSTLMKLPPITLLLLTSQSLNTTLLTLLAISSTLIGGWMGLNQTQTRKILAFSSISHLGWMIMIISYNPQLTILTFILYTIMTSTVFLSLAQIKVLKLSTLLISWTKTPMLNATVMLTLLSLAGLPPLTGFMPKWLIIQELTKQEMTPMATIITMLSLLSLFFYLRLAYHSTITLPPNSSNHMKLWRTNKTLNTPTAILTALSTTLLPLSPLIITML</sequence>
<reference key="1">
    <citation type="journal article" date="1990" name="J. Mol. Biol.">
        <title>Sequence and gene organization of the chicken mitochondrial genome. A novel gene order in higher vertebrates.</title>
        <authorList>
            <person name="Desjardins P."/>
            <person name="Morais R."/>
        </authorList>
    </citation>
    <scope>NUCLEOTIDE SEQUENCE [GENOMIC DNA]</scope>
    <source>
        <strain evidence="5">Red jungle fowl</strain>
    </source>
</reference>
<proteinExistence type="inferred from homology"/>